<proteinExistence type="evidence at protein level"/>
<sequence length="672" mass="74373">MKQEQSHEGDSYSTEFINLFGKDTATHPSSNNGANNNGMGSTNSLDQFVATASSSSSLVTSSENRRPLIGDVTNRGNTNLYDHAVTPEILLEQLAYVDNFIPSLDNEFSNVDWNVNTTHNNANNNGADTFSSINANPFDLDEQLAIELSAFADDSFIFPDEDKPSNNNNNSNNGNDDHSNHDVLHEDPSTNNRQRNPHFLTQRRNTFLTSQYDQSKSRFSSKNKRNGNNGETNNFGDNMQNNHPFEPNFMGSPSQFPADATNMTSIDHGGFTNVDITSTENNTTGDNGVDALSNLLHRTTHTPNRSSPLSNVTSAQNSSSQQRKHSESKVDSNSDNNSSNKAPNITVPDYSIIPTSVLVTLLPRVNVPNGAYNSLISAGFDNDQIDAIAAIMAYHHQKKIRENNSNNNKNINTNDSQEAPILKNINELLSVLIPPSPAETRGPTTLSTSPSFNEHGVVAEASFLSSILELGIKHPKSNNIHNQRQPSRNDHKISRESDGNNGNDNVHHNNAVIKSSTTRGDEIAKIRSEPTLNASSSDHKENSLKRSHSGDLKNKKVPVDRKYSDNEDDEYDDADLHGFEKKQLIKKELGDDDEDLLIQSKKSHQKKKLKEKELESSIHELTEIAASLQKRIHTLETENKLLKNLVLSSGETEGIKKAESLKKQIFEKVQKE</sequence>
<gene>
    <name type="primary">MET4</name>
    <name type="ordered locus">YNL103W</name>
    <name type="ORF">N2177</name>
</gene>
<protein>
    <recommendedName>
        <fullName>Transcriptional activator of sulfur metabolism MET4</fullName>
    </recommendedName>
    <alternativeName>
        <fullName>Methionine-requiring protein 4</fullName>
    </alternativeName>
</protein>
<name>MET4_YEAST</name>
<reference key="1">
    <citation type="journal article" date="1992" name="Mol. Cell. Biol.">
        <title>MET4, a leucine zipper protein, and centromere-binding factor 1 are both required for transcriptional activation of sulfur metabolism in Saccharomyces cerevisiae.</title>
        <authorList>
            <person name="Thomas D."/>
            <person name="Jacquemin I."/>
            <person name="Surdin-Kerjan Y."/>
        </authorList>
    </citation>
    <scope>NUCLEOTIDE SEQUENCE [GENOMIC DNA]</scope>
    <scope>FUNCTION</scope>
    <source>
        <strain>ATCC 26786 / X2180-1A</strain>
    </source>
</reference>
<reference key="2">
    <citation type="journal article" date="1993" name="Mol. Microbiol.">
        <title>The general amino acid control regulates MET4, which encodes a methionine-pathway-specific transcriptional activator of Saccharomyces cerevisiae.</title>
        <authorList>
            <person name="Mountain H.A."/>
            <person name="Bystroem A.S."/>
            <person name="Korch C."/>
        </authorList>
    </citation>
    <scope>NUCLEOTIDE SEQUENCE [GENOMIC DNA]</scope>
    <scope>FUNCTION</scope>
    <scope>INDUCTION</scope>
    <source>
        <strain>ATCC 204508 / S288c</strain>
    </source>
</reference>
<reference key="3">
    <citation type="journal article" date="1996" name="Yeast">
        <title>The sequence of a 21.3 kb DNA fragment from the left arm of yeast chromosome XIV reveals LEU4, MET4, POL1, RAS2, and six new open reading frames.</title>
        <authorList>
            <person name="Saiz J.E."/>
            <person name="Buitrago M.J."/>
            <person name="Soler A."/>
            <person name="del Rey F."/>
            <person name="Revuelta J.L."/>
        </authorList>
    </citation>
    <scope>NUCLEOTIDE SEQUENCE [GENOMIC DNA]</scope>
    <source>
        <strain>ATCC 96604 / S288c / FY1679</strain>
    </source>
</reference>
<reference key="4">
    <citation type="journal article" date="1997" name="Nature">
        <title>The nucleotide sequence of Saccharomyces cerevisiae chromosome XIV and its evolutionary implications.</title>
        <authorList>
            <person name="Philippsen P."/>
            <person name="Kleine K."/>
            <person name="Poehlmann R."/>
            <person name="Duesterhoeft A."/>
            <person name="Hamberg K."/>
            <person name="Hegemann J.H."/>
            <person name="Obermaier B."/>
            <person name="Urrestarazu L.A."/>
            <person name="Aert R."/>
            <person name="Albermann K."/>
            <person name="Altmann R."/>
            <person name="Andre B."/>
            <person name="Baladron V."/>
            <person name="Ballesta J.P.G."/>
            <person name="Becam A.-M."/>
            <person name="Beinhauer J.D."/>
            <person name="Boskovic J."/>
            <person name="Buitrago M.J."/>
            <person name="Bussereau F."/>
            <person name="Coster F."/>
            <person name="Crouzet M."/>
            <person name="D'Angelo M."/>
            <person name="Dal Pero F."/>
            <person name="De Antoni A."/>
            <person name="del Rey F."/>
            <person name="Doignon F."/>
            <person name="Domdey H."/>
            <person name="Dubois E."/>
            <person name="Fiedler T.A."/>
            <person name="Fleig U."/>
            <person name="Floeth M."/>
            <person name="Fritz C."/>
            <person name="Gaillardin C."/>
            <person name="Garcia-Cantalejo J.M."/>
            <person name="Glansdorff N."/>
            <person name="Goffeau A."/>
            <person name="Gueldener U."/>
            <person name="Herbert C.J."/>
            <person name="Heumann K."/>
            <person name="Heuss-Neitzel D."/>
            <person name="Hilbert H."/>
            <person name="Hinni K."/>
            <person name="Iraqui Houssaini I."/>
            <person name="Jacquet M."/>
            <person name="Jimenez A."/>
            <person name="Jonniaux J.-L."/>
            <person name="Karpfinger-Hartl L."/>
            <person name="Lanfranchi G."/>
            <person name="Lepingle A."/>
            <person name="Levesque H."/>
            <person name="Lyck R."/>
            <person name="Maftahi M."/>
            <person name="Mallet L."/>
            <person name="Maurer C.T.C."/>
            <person name="Messenguy F."/>
            <person name="Mewes H.-W."/>
            <person name="Moestl D."/>
            <person name="Nasr F."/>
            <person name="Nicaud J.-M."/>
            <person name="Niedenthal R.K."/>
            <person name="Pandolfo D."/>
            <person name="Pierard A."/>
            <person name="Piravandi E."/>
            <person name="Planta R.J."/>
            <person name="Pohl T.M."/>
            <person name="Purnelle B."/>
            <person name="Rebischung C."/>
            <person name="Remacha M.A."/>
            <person name="Revuelta J.L."/>
            <person name="Rinke M."/>
            <person name="Saiz J.E."/>
            <person name="Sartorello F."/>
            <person name="Scherens B."/>
            <person name="Sen-Gupta M."/>
            <person name="Soler-Mira A."/>
            <person name="Urbanus J.H.M."/>
            <person name="Valle G."/>
            <person name="Van Dyck L."/>
            <person name="Verhasselt P."/>
            <person name="Vierendeels F."/>
            <person name="Vissers S."/>
            <person name="Voet M."/>
            <person name="Volckaert G."/>
            <person name="Wach A."/>
            <person name="Wambutt R."/>
            <person name="Wedler H."/>
            <person name="Zollner A."/>
            <person name="Hani J."/>
        </authorList>
    </citation>
    <scope>NUCLEOTIDE SEQUENCE [LARGE SCALE GENOMIC DNA]</scope>
    <source>
        <strain>ATCC 204508 / S288c</strain>
    </source>
</reference>
<reference key="5">
    <citation type="journal article" date="2014" name="G3 (Bethesda)">
        <title>The reference genome sequence of Saccharomyces cerevisiae: Then and now.</title>
        <authorList>
            <person name="Engel S.R."/>
            <person name="Dietrich F.S."/>
            <person name="Fisk D.G."/>
            <person name="Binkley G."/>
            <person name="Balakrishnan R."/>
            <person name="Costanzo M.C."/>
            <person name="Dwight S.S."/>
            <person name="Hitz B.C."/>
            <person name="Karra K."/>
            <person name="Nash R.S."/>
            <person name="Weng S."/>
            <person name="Wong E.D."/>
            <person name="Lloyd P."/>
            <person name="Skrzypek M.S."/>
            <person name="Miyasato S.R."/>
            <person name="Simison M."/>
            <person name="Cherry J.M."/>
        </authorList>
    </citation>
    <scope>GENOME REANNOTATION</scope>
    <source>
        <strain>ATCC 204508 / S288c</strain>
    </source>
</reference>
<reference key="6">
    <citation type="journal article" date="1995" name="Mol. Cell. Biol.">
        <title>Functional analysis of Met4, a yeast transcriptional activator responsive to S-adenosylmethionine.</title>
        <authorList>
            <person name="Kuras L."/>
            <person name="Thomas D."/>
        </authorList>
    </citation>
    <scope>FUNCTION</scope>
    <scope>FUNCTIONAL REGIONS</scope>
</reference>
<reference key="7">
    <citation type="journal article" date="1995" name="Mol. Cell. Biol.">
        <title>Met30p, a yeast transcriptional inhibitor that responds to S-adenosylmethionine, is an essential protein with WD40 repeats.</title>
        <authorList>
            <person name="Thomas D."/>
            <person name="Kuras L."/>
            <person name="Barbey R."/>
            <person name="Cherest H."/>
            <person name="Blaiseau P.L."/>
            <person name="Surdin-Kerjan Y."/>
        </authorList>
    </citation>
    <scope>INTERACTION WITH MET30</scope>
</reference>
<reference key="8">
    <citation type="journal article" date="1996" name="EMBO J.">
        <title>A heteromeric complex containing the centromere binding factor 1 and two basic leucine zipper factors, Met4 and Met28, mediates the transcription activation of yeast sulfur metabolism.</title>
        <authorList>
            <person name="Kuras L."/>
            <person name="Cherest H."/>
            <person name="Surdin-Kerjan Y."/>
            <person name="Thomas D."/>
        </authorList>
    </citation>
    <scope>FUNCTION</scope>
    <scope>SUBUNIT</scope>
</reference>
<reference key="9">
    <citation type="journal article" date="1997" name="EMBO J.">
        <title>Assembly of a bZIP-bHLH transcription activation complex: formation of the yeast Cbf1-Met4-Met28 complex is regulated through Met28 stimulation of Cbf1 DNA binding.</title>
        <authorList>
            <person name="Kuras L."/>
            <person name="Barbey R."/>
            <person name="Thomas D."/>
        </authorList>
    </citation>
    <scope>FUNCTION</scope>
    <scope>SUBUNIT</scope>
</reference>
<reference key="10">
    <citation type="journal article" date="1998" name="EMBO J.">
        <title>Multiple transcriptional activation complexes tether the yeast activator Met4 to DNA.</title>
        <authorList>
            <person name="Blaiseau P.L."/>
            <person name="Thomas D."/>
        </authorList>
    </citation>
    <scope>FUNCTION</scope>
    <scope>SUBUNIT</scope>
</reference>
<reference key="11">
    <citation type="journal article" date="2000" name="EMBO J.">
        <title>Feedback-regulated degradation of the transcriptional activator Met4 is triggered by the SCF(Met30) complex.</title>
        <authorList>
            <person name="Rouillon A."/>
            <person name="Barbey R."/>
            <person name="Patton E.E."/>
            <person name="Tyers M."/>
            <person name="Thomas D."/>
        </authorList>
    </citation>
    <scope>FUNCTION</scope>
    <scope>SUBUNIT</scope>
</reference>
<reference key="12">
    <citation type="journal article" date="2003" name="Nature">
        <title>Global analysis of protein localization in budding yeast.</title>
        <authorList>
            <person name="Huh W.-K."/>
            <person name="Falvo J.V."/>
            <person name="Gerke L.C."/>
            <person name="Carroll A.S."/>
            <person name="Howson R.W."/>
            <person name="Weissman J.S."/>
            <person name="O'Shea E.K."/>
        </authorList>
    </citation>
    <scope>SUBCELLULAR LOCATION [LARGE SCALE ANALYSIS]</scope>
</reference>
<reference key="13">
    <citation type="journal article" date="2003" name="Nature">
        <title>Global analysis of protein expression in yeast.</title>
        <authorList>
            <person name="Ghaemmaghami S."/>
            <person name="Huh W.-K."/>
            <person name="Bower K."/>
            <person name="Howson R.W."/>
            <person name="Belle A."/>
            <person name="Dephoure N."/>
            <person name="O'Shea E.K."/>
            <person name="Weissman J.S."/>
        </authorList>
    </citation>
    <scope>LEVEL OF PROTEIN EXPRESSION [LARGE SCALE ANALYSIS]</scope>
</reference>
<reference key="14">
    <citation type="journal article" date="2005" name="Mol. Biol. Cell">
        <title>The yeast ubiquitin ligase SCFMet30 regulates heavy metal response.</title>
        <authorList>
            <person name="Yen J.L."/>
            <person name="Su N.Y."/>
            <person name="Kaiser P."/>
        </authorList>
    </citation>
    <scope>FUNCTION</scope>
    <scope>ACTIVATION BY CADMIUM AND ARSENIC</scope>
    <scope>INACTIVATION BY HYDROGEN PEROXIDE</scope>
</reference>
<reference key="15">
    <citation type="journal article" date="2005" name="Mol. Genet. Genomics">
        <title>Identification of residues in the WD-40 repeat motif of the F-box protein Met30p required for interaction with its substrate Met4p.</title>
        <authorList>
            <person name="Brunson L.E."/>
            <person name="Dixon C."/>
            <person name="LeFebvre A."/>
            <person name="Sun L."/>
            <person name="Mathias N."/>
        </authorList>
    </citation>
    <scope>INTERACTION WITH MET30</scope>
</reference>
<reference key="16">
    <citation type="journal article" date="2007" name="J. Proteome Res.">
        <title>Large-scale phosphorylation analysis of alpha-factor-arrested Saccharomyces cerevisiae.</title>
        <authorList>
            <person name="Li X."/>
            <person name="Gerber S.A."/>
            <person name="Rudner A.D."/>
            <person name="Beausoleil S.A."/>
            <person name="Haas W."/>
            <person name="Villen J."/>
            <person name="Elias J.E."/>
            <person name="Gygi S.P."/>
        </authorList>
    </citation>
    <scope>PHOSPHORYLATION [LARGE SCALE ANALYSIS] AT SER-564</scope>
    <scope>IDENTIFICATION BY MASS SPECTROMETRY [LARGE SCALE ANALYSIS]</scope>
    <source>
        <strain>ADR376</strain>
    </source>
</reference>
<reference key="17">
    <citation type="journal article" date="2007" name="Proc. Natl. Acad. Sci. U.S.A.">
        <title>Analysis of phosphorylation sites on proteins from Saccharomyces cerevisiae by electron transfer dissociation (ETD) mass spectrometry.</title>
        <authorList>
            <person name="Chi A."/>
            <person name="Huttenhower C."/>
            <person name="Geer L.Y."/>
            <person name="Coon J.J."/>
            <person name="Syka J.E.P."/>
            <person name="Bai D.L."/>
            <person name="Shabanowitz J."/>
            <person name="Burke D.J."/>
            <person name="Troyanskaya O.G."/>
            <person name="Hunt D.F."/>
        </authorList>
    </citation>
    <scope>IDENTIFICATION BY MASS SPECTROMETRY [LARGE SCALE ANALYSIS]</scope>
</reference>
<reference key="18">
    <citation type="journal article" date="2008" name="Mol. Cell. Proteomics">
        <title>A multidimensional chromatography technology for in-depth phosphoproteome analysis.</title>
        <authorList>
            <person name="Albuquerque C.P."/>
            <person name="Smolka M.B."/>
            <person name="Payne S.H."/>
            <person name="Bafna V."/>
            <person name="Eng J."/>
            <person name="Zhou H."/>
        </authorList>
    </citation>
    <scope>PHOSPHORYLATION [LARGE SCALE ANALYSIS] AT SER-416</scope>
    <scope>IDENTIFICATION BY MASS SPECTROMETRY [LARGE SCALE ANALYSIS]</scope>
</reference>
<reference key="19">
    <citation type="journal article" date="2009" name="Science">
        <title>Global analysis of Cdk1 substrate phosphorylation sites provides insights into evolution.</title>
        <authorList>
            <person name="Holt L.J."/>
            <person name="Tuch B.B."/>
            <person name="Villen J."/>
            <person name="Johnson A.D."/>
            <person name="Gygi S.P."/>
            <person name="Morgan D.O."/>
        </authorList>
    </citation>
    <scope>PHOSPHORYLATION [LARGE SCALE ANALYSIS] AT SER-416 AND SER-564</scope>
    <scope>IDENTIFICATION BY MASS SPECTROMETRY [LARGE SCALE ANALYSIS]</scope>
</reference>
<reference key="20">
    <citation type="journal article" date="2020" name="Cell. Mol. Life Sci.">
        <title>The evolution of the 9aaTAD domain in Sp2 proteins: inactivation with valines and intron reservoirs.</title>
        <authorList>
            <person name="Piskacek M."/>
            <person name="Havelka M."/>
            <person name="Jendruchova K."/>
            <person name="Knight A."/>
            <person name="Keegan L.P."/>
        </authorList>
    </citation>
    <scope>9AATAD MOTIF</scope>
</reference>
<keyword id="KW-0010">Activator</keyword>
<keyword id="KW-0028">Amino-acid biosynthesis</keyword>
<keyword id="KW-0175">Coiled coil</keyword>
<keyword id="KW-0198">Cysteine biosynthesis</keyword>
<keyword id="KW-0238">DNA-binding</keyword>
<keyword id="KW-0486">Methionine biosynthesis</keyword>
<keyword id="KW-0539">Nucleus</keyword>
<keyword id="KW-0597">Phosphoprotein</keyword>
<keyword id="KW-1185">Reference proteome</keyword>
<keyword id="KW-0804">Transcription</keyword>
<keyword id="KW-0805">Transcription regulation</keyword>
<comment type="function">
    <text evidence="4 7 8 11 12 14 15 16">Positive trans-acting factor capable of stimulating the transcription of the MET genes from the methionine biosynthetic pathway. MET4, MET28 and CBF1 are required for full induction of MET25 and MET16 gene transcription. MET4 controls as well the derepression of MET6. Required for the transcription of genes necessary for sulfur amino acid biosynthesis. Involved in the transcription activation of MET28 and MET30. Required for MET3 gene expression via assembly of the MET4-MET28-MET31 and MET4-MET28-MET32 complexes. Involved in response to cadmium and arsenic. Cadmium-activated MET4 also induces glutathione biosynthesis.</text>
</comment>
<comment type="subunit">
    <text evidence="4 9 13 14 15 16">Interacts with MET30. Tethered to DNA through two alternate complexes associating MET4 with MET28 and either MET31 or MET32. Interacts with MET28 and CBF1 through its leucine zipper to form a heteromeric complex.</text>
</comment>
<comment type="interaction">
    <interactant intactId="EBI-10757">
        <id>P32389</id>
    </interactant>
    <interactant intactId="EBI-11503">
        <id>P40573</id>
        <label>MET28</label>
    </interactant>
    <organismsDiffer>false</organismsDiffer>
    <experiments>5</experiments>
</comment>
<comment type="interaction">
    <interactant intactId="EBI-10757">
        <id>P32389</id>
    </interactant>
    <interactant intactId="EBI-11507">
        <id>P39014</id>
        <label>MET30</label>
    </interactant>
    <organismsDiffer>false</organismsDiffer>
    <experiments>7</experiments>
</comment>
<comment type="interaction">
    <interactant intactId="EBI-10757">
        <id>P32389</id>
    </interactant>
    <interactant intactId="EBI-11511">
        <id>Q03081</id>
        <label>MET31</label>
    </interactant>
    <organismsDiffer>false</organismsDiffer>
    <experiments>2</experiments>
</comment>
<comment type="interaction">
    <interactant intactId="EBI-10757">
        <id>P32389</id>
    </interactant>
    <interactant intactId="EBI-10757">
        <id>P32389</id>
        <label>MET4</label>
    </interactant>
    <organismsDiffer>false</organismsDiffer>
    <experiments>2</experiments>
</comment>
<comment type="subcellular location">
    <subcellularLocation>
        <location evidence="5">Nucleus</location>
    </subcellularLocation>
</comment>
<comment type="induction">
    <text evidence="12">Regulated by the general amino acid control.</text>
</comment>
<comment type="domain">
    <text evidence="10">The 9aaTAD motif is a transactivation domain present in a large number of yeast and animal transcription factors.</text>
</comment>
<comment type="miscellaneous">
    <text evidence="6">Present with 1300 molecules/cell in log phase SD medium.</text>
</comment>
<comment type="miscellaneous">
    <text>Transcriptional activation function is inhibited by the elevation of intracellular S-adenosylmethionine (AdoMet), but is activated by cadmium and arsenic which leads to phosphorylation and prevents ubiquitination. Inactivation by oxidative stress induced by hydrogen peroxide promotes ubiquitination.</text>
</comment>
<comment type="similarity">
    <text evidence="17">Belongs to the bZIP family.</text>
</comment>
<comment type="sequence caution" evidence="17">
    <conflict type="frameshift">
        <sequence resource="EMBL-CDS" id="AAA34776"/>
    </conflict>
</comment>
<comment type="sequence caution" evidence="17">
    <conflict type="erroneous initiation">
        <sequence resource="EMBL-CDS" id="CAA78109"/>
    </conflict>
</comment>
<comment type="sequence caution" evidence="17">
    <conflict type="erroneous initiation">
        <sequence resource="EMBL-CDS" id="CAA90523"/>
    </conflict>
</comment>
<accession>P32389</accession>
<accession>D6W176</accession>
<feature type="chain" id="PRO_0000076519" description="Transcriptional activator of sulfur metabolism MET4">
    <location>
        <begin position="1"/>
        <end position="672"/>
    </location>
</feature>
<feature type="domain" description="bZIP">
    <location>
        <begin position="586"/>
        <end position="649"/>
    </location>
</feature>
<feature type="region of interest" description="Disordered" evidence="3">
    <location>
        <begin position="1"/>
        <end position="44"/>
    </location>
</feature>
<feature type="region of interest" description="Transcriptional activation">
    <location>
        <begin position="95"/>
        <end position="144"/>
    </location>
</feature>
<feature type="region of interest" description="Disordered" evidence="3">
    <location>
        <begin position="157"/>
        <end position="265"/>
    </location>
</feature>
<feature type="region of interest" description="Inhibitory region; AdoMet responsiveness; required for interaction with MET30">
    <location>
        <begin position="188"/>
        <end position="235"/>
    </location>
</feature>
<feature type="region of interest" description="Disordered" evidence="3">
    <location>
        <begin position="299"/>
        <end position="347"/>
    </location>
</feature>
<feature type="region of interest" description="Auxiliary; required for high transcriptional activity under nonrepressive growth conditions">
    <location>
        <begin position="312"/>
        <end position="375"/>
    </location>
</feature>
<feature type="region of interest" description="Required for interaction with MET31 and MET32">
    <location>
        <begin position="375"/>
        <end position="403"/>
    </location>
</feature>
<feature type="region of interest" description="Disordered" evidence="3">
    <location>
        <begin position="475"/>
        <end position="574"/>
    </location>
</feature>
<feature type="region of interest" description="Basic motif" evidence="1">
    <location>
        <begin position="601"/>
        <end position="612"/>
    </location>
</feature>
<feature type="region of interest" description="Leucine-zipper" evidence="1">
    <location>
        <begin position="614"/>
        <end position="642"/>
    </location>
</feature>
<feature type="coiled-coil region" evidence="2">
    <location>
        <begin position="609"/>
        <end position="648"/>
    </location>
</feature>
<feature type="short sequence motif" description="9aaTAD 1" evidence="10">
    <location>
        <begin position="89"/>
        <end position="97"/>
    </location>
</feature>
<feature type="short sequence motif" description="9aaTAD 2" evidence="10">
    <location>
        <begin position="102"/>
        <end position="110"/>
    </location>
</feature>
<feature type="short sequence motif" description="9aaTAD 3" evidence="10">
    <location>
        <begin position="109"/>
        <end position="117"/>
    </location>
</feature>
<feature type="compositionally biased region" description="Basic and acidic residues" evidence="3">
    <location>
        <begin position="1"/>
        <end position="10"/>
    </location>
</feature>
<feature type="compositionally biased region" description="Low complexity" evidence="3">
    <location>
        <begin position="29"/>
        <end position="44"/>
    </location>
</feature>
<feature type="compositionally biased region" description="Low complexity" evidence="3">
    <location>
        <begin position="165"/>
        <end position="174"/>
    </location>
</feature>
<feature type="compositionally biased region" description="Basic and acidic residues" evidence="3">
    <location>
        <begin position="175"/>
        <end position="188"/>
    </location>
</feature>
<feature type="compositionally biased region" description="Polar residues" evidence="3">
    <location>
        <begin position="202"/>
        <end position="214"/>
    </location>
</feature>
<feature type="compositionally biased region" description="Low complexity" evidence="3">
    <location>
        <begin position="226"/>
        <end position="238"/>
    </location>
</feature>
<feature type="compositionally biased region" description="Polar residues" evidence="3">
    <location>
        <begin position="251"/>
        <end position="265"/>
    </location>
</feature>
<feature type="compositionally biased region" description="Polar residues" evidence="3">
    <location>
        <begin position="301"/>
        <end position="321"/>
    </location>
</feature>
<feature type="compositionally biased region" description="Polar residues" evidence="3">
    <location>
        <begin position="477"/>
        <end position="486"/>
    </location>
</feature>
<feature type="compositionally biased region" description="Basic and acidic residues" evidence="3">
    <location>
        <begin position="487"/>
        <end position="498"/>
    </location>
</feature>
<feature type="compositionally biased region" description="Low complexity" evidence="3">
    <location>
        <begin position="499"/>
        <end position="512"/>
    </location>
</feature>
<feature type="compositionally biased region" description="Basic and acidic residues" evidence="3">
    <location>
        <begin position="519"/>
        <end position="528"/>
    </location>
</feature>
<feature type="compositionally biased region" description="Basic and acidic residues" evidence="3">
    <location>
        <begin position="537"/>
        <end position="565"/>
    </location>
</feature>
<feature type="modified residue" description="Phosphoserine" evidence="19 20">
    <location>
        <position position="416"/>
    </location>
</feature>
<feature type="modified residue" description="Phosphoserine" evidence="18 20">
    <location>
        <position position="564"/>
    </location>
</feature>
<feature type="sequence conflict" description="In Ref. 1; AAA34776 and 4; DAA10442." evidence="17" ref="1 4">
    <original>RG</original>
    <variation>AA</variation>
    <location>
        <begin position="441"/>
        <end position="442"/>
    </location>
</feature>
<organism>
    <name type="scientific">Saccharomyces cerevisiae (strain ATCC 204508 / S288c)</name>
    <name type="common">Baker's yeast</name>
    <dbReference type="NCBI Taxonomy" id="559292"/>
    <lineage>
        <taxon>Eukaryota</taxon>
        <taxon>Fungi</taxon>
        <taxon>Dikarya</taxon>
        <taxon>Ascomycota</taxon>
        <taxon>Saccharomycotina</taxon>
        <taxon>Saccharomycetes</taxon>
        <taxon>Saccharomycetales</taxon>
        <taxon>Saccharomycetaceae</taxon>
        <taxon>Saccharomyces</taxon>
    </lineage>
</organism>
<dbReference type="EMBL" id="M84455">
    <property type="protein sequence ID" value="AAA34776.1"/>
    <property type="status" value="ALT_FRAME"/>
    <property type="molecule type" value="Genomic_DNA"/>
</dbReference>
<dbReference type="EMBL" id="Z12126">
    <property type="protein sequence ID" value="CAA78109.1"/>
    <property type="status" value="ALT_INIT"/>
    <property type="molecule type" value="Genomic_DNA"/>
</dbReference>
<dbReference type="EMBL" id="Z50161">
    <property type="protein sequence ID" value="CAA90523.1"/>
    <property type="status" value="ALT_INIT"/>
    <property type="molecule type" value="Genomic_DNA"/>
</dbReference>
<dbReference type="EMBL" id="Z71379">
    <property type="protein sequence ID" value="CAA95979.1"/>
    <property type="molecule type" value="Genomic_DNA"/>
</dbReference>
<dbReference type="EMBL" id="BK006947">
    <property type="protein sequence ID" value="DAA10442.1"/>
    <property type="molecule type" value="Genomic_DNA"/>
</dbReference>
<dbReference type="PIR" id="S63043">
    <property type="entry name" value="S63043"/>
</dbReference>
<dbReference type="RefSeq" id="NP_014296.4">
    <property type="nucleotide sequence ID" value="NM_001182941.3"/>
</dbReference>
<dbReference type="SMR" id="P32389"/>
<dbReference type="BioGRID" id="35720">
    <property type="interactions" value="81"/>
</dbReference>
<dbReference type="ComplexPortal" id="CPX-1015">
    <property type="entry name" value="MET4-MET28-MET32 sulfur metabolism transcription factor complex"/>
</dbReference>
<dbReference type="ComplexPortal" id="CPX-1016">
    <property type="entry name" value="CBF1-MET4-MET28 sulfur metabolism transcription factor complex"/>
</dbReference>
<dbReference type="ComplexPortal" id="CPX-999">
    <property type="entry name" value="MET4-MET28-MET31 sulfur metabolism transcription factor complex"/>
</dbReference>
<dbReference type="DIP" id="DIP-2241N"/>
<dbReference type="FunCoup" id="P32389">
    <property type="interactions" value="841"/>
</dbReference>
<dbReference type="IntAct" id="P32389">
    <property type="interactions" value="43"/>
</dbReference>
<dbReference type="MINT" id="P32389"/>
<dbReference type="STRING" id="4932.YNL103W"/>
<dbReference type="iPTMnet" id="P32389"/>
<dbReference type="PaxDb" id="4932-YNL103W"/>
<dbReference type="PeptideAtlas" id="P32389"/>
<dbReference type="TopDownProteomics" id="P32389"/>
<dbReference type="GeneID" id="855620"/>
<dbReference type="KEGG" id="sce:YNL103W"/>
<dbReference type="AGR" id="SGD:S000005047"/>
<dbReference type="SGD" id="S000005047">
    <property type="gene designation" value="MET4"/>
</dbReference>
<dbReference type="eggNOG" id="ENOG502QSA8">
    <property type="taxonomic scope" value="Eukaryota"/>
</dbReference>
<dbReference type="HOGENOM" id="CLU_022093_0_0_1"/>
<dbReference type="InParanoid" id="P32389"/>
<dbReference type="OrthoDB" id="1939598at2759"/>
<dbReference type="BioCyc" id="YEAST:G3O-33131-MONOMER"/>
<dbReference type="BioGRID-ORCS" id="855620">
    <property type="hits" value="4 hits in 10 CRISPR screens"/>
</dbReference>
<dbReference type="PRO" id="PR:P32389"/>
<dbReference type="Proteomes" id="UP000002311">
    <property type="component" value="Chromosome XIV"/>
</dbReference>
<dbReference type="RNAct" id="P32389">
    <property type="molecule type" value="protein"/>
</dbReference>
<dbReference type="GO" id="GO:0089713">
    <property type="term" value="C:Cbf1-Met4-Met28 complex"/>
    <property type="evidence" value="ECO:0000314"/>
    <property type="project" value="SGD"/>
</dbReference>
<dbReference type="GO" id="GO:0005634">
    <property type="term" value="C:nucleus"/>
    <property type="evidence" value="ECO:0000353"/>
    <property type="project" value="SGD"/>
</dbReference>
<dbReference type="GO" id="GO:0005667">
    <property type="term" value="C:transcription regulator complex"/>
    <property type="evidence" value="ECO:0000303"/>
    <property type="project" value="ComplexPortal"/>
</dbReference>
<dbReference type="GO" id="GO:0001228">
    <property type="term" value="F:DNA-binding transcription activator activity, RNA polymerase II-specific"/>
    <property type="evidence" value="ECO:0000318"/>
    <property type="project" value="GO_Central"/>
</dbReference>
<dbReference type="GO" id="GO:0042802">
    <property type="term" value="F:identical protein binding"/>
    <property type="evidence" value="ECO:0000353"/>
    <property type="project" value="IntAct"/>
</dbReference>
<dbReference type="GO" id="GO:0000977">
    <property type="term" value="F:RNA polymerase II transcription regulatory region sequence-specific DNA binding"/>
    <property type="evidence" value="ECO:0000318"/>
    <property type="project" value="GO_Central"/>
</dbReference>
<dbReference type="GO" id="GO:0003713">
    <property type="term" value="F:transcription coactivator activity"/>
    <property type="evidence" value="ECO:0000314"/>
    <property type="project" value="SGD"/>
</dbReference>
<dbReference type="GO" id="GO:0019344">
    <property type="term" value="P:cysteine biosynthetic process"/>
    <property type="evidence" value="ECO:0007669"/>
    <property type="project" value="UniProtKB-KW"/>
</dbReference>
<dbReference type="GO" id="GO:0009086">
    <property type="term" value="P:methionine biosynthetic process"/>
    <property type="evidence" value="ECO:0007669"/>
    <property type="project" value="UniProtKB-KW"/>
</dbReference>
<dbReference type="GO" id="GO:0045944">
    <property type="term" value="P:positive regulation of transcription by RNA polymerase II"/>
    <property type="evidence" value="ECO:0000314"/>
    <property type="project" value="SGD"/>
</dbReference>
<dbReference type="GO" id="GO:0042762">
    <property type="term" value="P:regulation of sulfur metabolic process"/>
    <property type="evidence" value="ECO:0000303"/>
    <property type="project" value="ComplexPortal"/>
</dbReference>
<dbReference type="GO" id="GO:0006357">
    <property type="term" value="P:regulation of transcription by RNA polymerase II"/>
    <property type="evidence" value="ECO:0000318"/>
    <property type="project" value="GO_Central"/>
</dbReference>
<dbReference type="GO" id="GO:0046685">
    <property type="term" value="P:response to arsenic-containing substance"/>
    <property type="evidence" value="ECO:0000314"/>
    <property type="project" value="SGD"/>
</dbReference>
<dbReference type="GO" id="GO:0046686">
    <property type="term" value="P:response to cadmium ion"/>
    <property type="evidence" value="ECO:0000314"/>
    <property type="project" value="SGD"/>
</dbReference>
<dbReference type="GO" id="GO:0000096">
    <property type="term" value="P:sulfur amino acid metabolic process"/>
    <property type="evidence" value="ECO:0000315"/>
    <property type="project" value="SGD"/>
</dbReference>
<dbReference type="PANTHER" id="PTHR13044">
    <property type="entry name" value="ACTIVATING TRANSCRIPTION FACTOR ATF 4/5"/>
    <property type="match status" value="1"/>
</dbReference>
<dbReference type="PANTHER" id="PTHR13044:SF14">
    <property type="entry name" value="CRYPTOCEPHAL, ISOFORM A"/>
    <property type="match status" value="1"/>
</dbReference>
<evidence type="ECO:0000250" key="1"/>
<evidence type="ECO:0000255" key="2"/>
<evidence type="ECO:0000256" key="3">
    <source>
        <dbReference type="SAM" id="MobiDB-lite"/>
    </source>
</evidence>
<evidence type="ECO:0000269" key="4">
    <source>
    </source>
</evidence>
<evidence type="ECO:0000269" key="5">
    <source>
    </source>
</evidence>
<evidence type="ECO:0000269" key="6">
    <source>
    </source>
</evidence>
<evidence type="ECO:0000269" key="7">
    <source>
    </source>
</evidence>
<evidence type="ECO:0000269" key="8">
    <source>
    </source>
</evidence>
<evidence type="ECO:0000269" key="9">
    <source>
    </source>
</evidence>
<evidence type="ECO:0000269" key="10">
    <source>
    </source>
</evidence>
<evidence type="ECO:0000269" key="11">
    <source>
    </source>
</evidence>
<evidence type="ECO:0000269" key="12">
    <source>
    </source>
</evidence>
<evidence type="ECO:0000269" key="13">
    <source>
    </source>
</evidence>
<evidence type="ECO:0000269" key="14">
    <source>
    </source>
</evidence>
<evidence type="ECO:0000269" key="15">
    <source>
    </source>
</evidence>
<evidence type="ECO:0000269" key="16">
    <source>
    </source>
</evidence>
<evidence type="ECO:0000305" key="17"/>
<evidence type="ECO:0007744" key="18">
    <source>
    </source>
</evidence>
<evidence type="ECO:0007744" key="19">
    <source>
    </source>
</evidence>
<evidence type="ECO:0007744" key="20">
    <source>
    </source>
</evidence>